<dbReference type="EMBL" id="AP006716">
    <property type="protein sequence ID" value="BAE04860.1"/>
    <property type="molecule type" value="Genomic_DNA"/>
</dbReference>
<dbReference type="RefSeq" id="WP_011275842.1">
    <property type="nucleotide sequence ID" value="NC_007168.1"/>
</dbReference>
<dbReference type="SMR" id="Q4L665"/>
<dbReference type="KEGG" id="sha:SH1551"/>
<dbReference type="eggNOG" id="COG3711">
    <property type="taxonomic scope" value="Bacteria"/>
</dbReference>
<dbReference type="HOGENOM" id="CLU_078802_0_0_9"/>
<dbReference type="OrthoDB" id="9813552at2"/>
<dbReference type="Proteomes" id="UP000000543">
    <property type="component" value="Chromosome"/>
</dbReference>
<dbReference type="GO" id="GO:0003723">
    <property type="term" value="F:RNA binding"/>
    <property type="evidence" value="ECO:0007669"/>
    <property type="project" value="InterPro"/>
</dbReference>
<dbReference type="GO" id="GO:0045893">
    <property type="term" value="P:positive regulation of DNA-templated transcription"/>
    <property type="evidence" value="ECO:0007669"/>
    <property type="project" value="InterPro"/>
</dbReference>
<dbReference type="Gene3D" id="1.20.58.1950">
    <property type="match status" value="1"/>
</dbReference>
<dbReference type="Gene3D" id="1.20.890.100">
    <property type="match status" value="1"/>
</dbReference>
<dbReference type="Gene3D" id="2.30.24.10">
    <property type="entry name" value="CAT RNA-binding domain"/>
    <property type="match status" value="1"/>
</dbReference>
<dbReference type="Gene3D" id="1.10.1790.10">
    <property type="entry name" value="PRD domain"/>
    <property type="match status" value="1"/>
</dbReference>
<dbReference type="InterPro" id="IPR050661">
    <property type="entry name" value="BglG_antiterminators"/>
</dbReference>
<dbReference type="InterPro" id="IPR004341">
    <property type="entry name" value="CAT_RNA-bd_dom"/>
</dbReference>
<dbReference type="InterPro" id="IPR036650">
    <property type="entry name" value="CAT_RNA-bd_dom_sf"/>
</dbReference>
<dbReference type="InterPro" id="IPR011608">
    <property type="entry name" value="PRD"/>
</dbReference>
<dbReference type="InterPro" id="IPR036634">
    <property type="entry name" value="PRD_sf"/>
</dbReference>
<dbReference type="InterPro" id="IPR001550">
    <property type="entry name" value="Transcrpt_antitermin_CS"/>
</dbReference>
<dbReference type="NCBIfam" id="NF047357">
    <property type="entry name" value="antiterm_GlcT"/>
    <property type="match status" value="1"/>
</dbReference>
<dbReference type="PANTHER" id="PTHR30185">
    <property type="entry name" value="CRYPTIC BETA-GLUCOSIDE BGL OPERON ANTITERMINATOR"/>
    <property type="match status" value="1"/>
</dbReference>
<dbReference type="PANTHER" id="PTHR30185:SF16">
    <property type="entry name" value="PROTEIN GLCT"/>
    <property type="match status" value="1"/>
</dbReference>
<dbReference type="Pfam" id="PF03123">
    <property type="entry name" value="CAT_RBD"/>
    <property type="match status" value="1"/>
</dbReference>
<dbReference type="Pfam" id="PF00874">
    <property type="entry name" value="PRD"/>
    <property type="match status" value="2"/>
</dbReference>
<dbReference type="SMART" id="SM01061">
    <property type="entry name" value="CAT_RBD"/>
    <property type="match status" value="1"/>
</dbReference>
<dbReference type="SUPFAM" id="SSF63520">
    <property type="entry name" value="PTS-regulatory domain, PRD"/>
    <property type="match status" value="2"/>
</dbReference>
<dbReference type="SUPFAM" id="SSF50151">
    <property type="entry name" value="SacY-like RNA-binding domain"/>
    <property type="match status" value="1"/>
</dbReference>
<dbReference type="PROSITE" id="PS00654">
    <property type="entry name" value="PRD_1"/>
    <property type="match status" value="1"/>
</dbReference>
<dbReference type="PROSITE" id="PS51372">
    <property type="entry name" value="PRD_2"/>
    <property type="match status" value="2"/>
</dbReference>
<organism>
    <name type="scientific">Staphylococcus haemolyticus (strain JCSC1435)</name>
    <dbReference type="NCBI Taxonomy" id="279808"/>
    <lineage>
        <taxon>Bacteria</taxon>
        <taxon>Bacillati</taxon>
        <taxon>Bacillota</taxon>
        <taxon>Bacilli</taxon>
        <taxon>Bacillales</taxon>
        <taxon>Staphylococcaceae</taxon>
        <taxon>Staphylococcus</taxon>
    </lineage>
</organism>
<reference key="1">
    <citation type="journal article" date="2005" name="J. Bacteriol.">
        <title>Whole-genome sequencing of Staphylococcus haemolyticus uncovers the extreme plasticity of its genome and the evolution of human-colonizing staphylococcal species.</title>
        <authorList>
            <person name="Takeuchi F."/>
            <person name="Watanabe S."/>
            <person name="Baba T."/>
            <person name="Yuzawa H."/>
            <person name="Ito T."/>
            <person name="Morimoto Y."/>
            <person name="Kuroda M."/>
            <person name="Cui L."/>
            <person name="Takahashi M."/>
            <person name="Ankai A."/>
            <person name="Baba S."/>
            <person name="Fukui S."/>
            <person name="Lee J.C."/>
            <person name="Hiramatsu K."/>
        </authorList>
    </citation>
    <scope>NUCLEOTIDE SEQUENCE [LARGE SCALE GENOMIC DNA]</scope>
    <source>
        <strain>JCSC1435</strain>
    </source>
</reference>
<comment type="similarity">
    <text evidence="2">Belongs to the transcriptional antiterminator BglG family. GlcT subfamily.</text>
</comment>
<evidence type="ECO:0000255" key="1">
    <source>
        <dbReference type="PROSITE-ProRule" id="PRU00704"/>
    </source>
</evidence>
<evidence type="ECO:0000305" key="2"/>
<proteinExistence type="inferred from homology"/>
<sequence>MGEYTISKALNNNVIICTYNNQEVILIGKGIGFNKKAGMTLDESASIEKVYKLEQKQQQEYYKSLVEIADEDVLQAIIESVNFITSTTHTTDDKNLVVALTDHIIFAYKRLKQNQIISNPFAIETKHLYSDAYAIASQVIDKLNQRLDVKFPPDEIGFIALHIASNTEDLTIHEMSLINKLISKSILIIENDLNHEIDNHTVQYQRFIRHIQFLIRRLNKKEYIYAQDVFIDMVKNHYPNAYNTAFKISKMIQKHLNIPIDDSEIVYLALHIYHFENQISSSHN</sequence>
<feature type="chain" id="PRO_0000352617" description="Protein GlcT">
    <location>
        <begin position="1"/>
        <end position="284"/>
    </location>
</feature>
<feature type="domain" description="PRD 1" evidence="1">
    <location>
        <begin position="65"/>
        <end position="173"/>
    </location>
</feature>
<feature type="domain" description="PRD 2" evidence="1">
    <location>
        <begin position="174"/>
        <end position="282"/>
    </location>
</feature>
<name>GLCT_STAHJ</name>
<protein>
    <recommendedName>
        <fullName>Protein GlcT</fullName>
    </recommendedName>
</protein>
<gene>
    <name type="primary">glcT</name>
    <name type="ordered locus">SH1551</name>
</gene>
<accession>Q4L665</accession>
<keyword id="KW-0677">Repeat</keyword>